<gene>
    <name evidence="2" type="primary">rpsL</name>
    <name type="ordered locus">PFLU_5532</name>
</gene>
<name>RS12_PSEFS</name>
<organism>
    <name type="scientific">Pseudomonas fluorescens (strain SBW25)</name>
    <dbReference type="NCBI Taxonomy" id="216595"/>
    <lineage>
        <taxon>Bacteria</taxon>
        <taxon>Pseudomonadati</taxon>
        <taxon>Pseudomonadota</taxon>
        <taxon>Gammaproteobacteria</taxon>
        <taxon>Pseudomonadales</taxon>
        <taxon>Pseudomonadaceae</taxon>
        <taxon>Pseudomonas</taxon>
    </lineage>
</organism>
<dbReference type="EMBL" id="AM181176">
    <property type="protein sequence ID" value="CAY52775.1"/>
    <property type="molecule type" value="Genomic_DNA"/>
</dbReference>
<dbReference type="RefSeq" id="WP_002555494.1">
    <property type="nucleotide sequence ID" value="NC_012660.1"/>
</dbReference>
<dbReference type="SMR" id="C3K2Y1"/>
<dbReference type="STRING" id="294.SRM1_05184"/>
<dbReference type="GeneID" id="97919457"/>
<dbReference type="eggNOG" id="COG0048">
    <property type="taxonomic scope" value="Bacteria"/>
</dbReference>
<dbReference type="HOGENOM" id="CLU_104295_1_2_6"/>
<dbReference type="OrthoDB" id="9802366at2"/>
<dbReference type="GO" id="GO:0015935">
    <property type="term" value="C:small ribosomal subunit"/>
    <property type="evidence" value="ECO:0007669"/>
    <property type="project" value="InterPro"/>
</dbReference>
<dbReference type="GO" id="GO:0019843">
    <property type="term" value="F:rRNA binding"/>
    <property type="evidence" value="ECO:0007669"/>
    <property type="project" value="UniProtKB-UniRule"/>
</dbReference>
<dbReference type="GO" id="GO:0003735">
    <property type="term" value="F:structural constituent of ribosome"/>
    <property type="evidence" value="ECO:0007669"/>
    <property type="project" value="InterPro"/>
</dbReference>
<dbReference type="GO" id="GO:0000049">
    <property type="term" value="F:tRNA binding"/>
    <property type="evidence" value="ECO:0007669"/>
    <property type="project" value="UniProtKB-UniRule"/>
</dbReference>
<dbReference type="GO" id="GO:0006412">
    <property type="term" value="P:translation"/>
    <property type="evidence" value="ECO:0007669"/>
    <property type="project" value="UniProtKB-UniRule"/>
</dbReference>
<dbReference type="CDD" id="cd03368">
    <property type="entry name" value="Ribosomal_S12"/>
    <property type="match status" value="1"/>
</dbReference>
<dbReference type="FunFam" id="2.40.50.140:FF:000001">
    <property type="entry name" value="30S ribosomal protein S12"/>
    <property type="match status" value="1"/>
</dbReference>
<dbReference type="Gene3D" id="2.40.50.140">
    <property type="entry name" value="Nucleic acid-binding proteins"/>
    <property type="match status" value="1"/>
</dbReference>
<dbReference type="HAMAP" id="MF_00403_B">
    <property type="entry name" value="Ribosomal_uS12_B"/>
    <property type="match status" value="1"/>
</dbReference>
<dbReference type="InterPro" id="IPR012340">
    <property type="entry name" value="NA-bd_OB-fold"/>
</dbReference>
<dbReference type="InterPro" id="IPR006032">
    <property type="entry name" value="Ribosomal_uS12"/>
</dbReference>
<dbReference type="InterPro" id="IPR005679">
    <property type="entry name" value="Ribosomal_uS12_bac"/>
</dbReference>
<dbReference type="NCBIfam" id="TIGR00981">
    <property type="entry name" value="rpsL_bact"/>
    <property type="match status" value="1"/>
</dbReference>
<dbReference type="PANTHER" id="PTHR11652">
    <property type="entry name" value="30S RIBOSOMAL PROTEIN S12 FAMILY MEMBER"/>
    <property type="match status" value="1"/>
</dbReference>
<dbReference type="Pfam" id="PF00164">
    <property type="entry name" value="Ribosom_S12_S23"/>
    <property type="match status" value="1"/>
</dbReference>
<dbReference type="PIRSF" id="PIRSF002133">
    <property type="entry name" value="Ribosomal_S12/S23"/>
    <property type="match status" value="1"/>
</dbReference>
<dbReference type="PRINTS" id="PR01034">
    <property type="entry name" value="RIBOSOMALS12"/>
</dbReference>
<dbReference type="SUPFAM" id="SSF50249">
    <property type="entry name" value="Nucleic acid-binding proteins"/>
    <property type="match status" value="1"/>
</dbReference>
<dbReference type="PROSITE" id="PS00055">
    <property type="entry name" value="RIBOSOMAL_S12"/>
    <property type="match status" value="1"/>
</dbReference>
<protein>
    <recommendedName>
        <fullName evidence="2">Small ribosomal subunit protein uS12</fullName>
    </recommendedName>
    <alternativeName>
        <fullName evidence="4">30S ribosomal protein S12</fullName>
    </alternativeName>
</protein>
<reference key="1">
    <citation type="journal article" date="2009" name="Genome Biol.">
        <title>Genomic and genetic analyses of diversity and plant interactions of Pseudomonas fluorescens.</title>
        <authorList>
            <person name="Silby M.W."/>
            <person name="Cerdeno-Tarraga A.M."/>
            <person name="Vernikos G.S."/>
            <person name="Giddens S.R."/>
            <person name="Jackson R.W."/>
            <person name="Preston G.M."/>
            <person name="Zhang X.-X."/>
            <person name="Moon C.D."/>
            <person name="Gehrig S.M."/>
            <person name="Godfrey S.A.C."/>
            <person name="Knight C.G."/>
            <person name="Malone J.G."/>
            <person name="Robinson Z."/>
            <person name="Spiers A.J."/>
            <person name="Harris S."/>
            <person name="Challis G.L."/>
            <person name="Yaxley A.M."/>
            <person name="Harris D."/>
            <person name="Seeger K."/>
            <person name="Murphy L."/>
            <person name="Rutter S."/>
            <person name="Squares R."/>
            <person name="Quail M.A."/>
            <person name="Saunders E."/>
            <person name="Mavromatis K."/>
            <person name="Brettin T.S."/>
            <person name="Bentley S.D."/>
            <person name="Hothersall J."/>
            <person name="Stephens E."/>
            <person name="Thomas C.M."/>
            <person name="Parkhill J."/>
            <person name="Levy S.B."/>
            <person name="Rainey P.B."/>
            <person name="Thomson N.R."/>
        </authorList>
    </citation>
    <scope>NUCLEOTIDE SEQUENCE [LARGE SCALE GENOMIC DNA]</scope>
    <source>
        <strain>SBW25</strain>
    </source>
</reference>
<feature type="chain" id="PRO_1000205923" description="Small ribosomal subunit protein uS12">
    <location>
        <begin position="1"/>
        <end position="123"/>
    </location>
</feature>
<feature type="region of interest" description="Disordered" evidence="3">
    <location>
        <begin position="100"/>
        <end position="123"/>
    </location>
</feature>
<feature type="compositionally biased region" description="Basic residues" evidence="3">
    <location>
        <begin position="111"/>
        <end position="123"/>
    </location>
</feature>
<feature type="modified residue" description="3-methylthioaspartic acid" evidence="1">
    <location>
        <position position="89"/>
    </location>
</feature>
<accession>C3K2Y1</accession>
<keyword id="KW-0488">Methylation</keyword>
<keyword id="KW-0687">Ribonucleoprotein</keyword>
<keyword id="KW-0689">Ribosomal protein</keyword>
<keyword id="KW-0694">RNA-binding</keyword>
<keyword id="KW-0699">rRNA-binding</keyword>
<keyword id="KW-0820">tRNA-binding</keyword>
<sequence length="123" mass="13725">MATINQLVRQPRKRIVEKSDVPALQNCPQRRGVCTRVYTTTPKKPNSALRKVCRVRLTNGFEVSSYIGGEGHNLQEHSVVLIRGGRVKDLPGVRYHTVRGSLDTSGVKGRNQGRSKYGTKKPK</sequence>
<proteinExistence type="inferred from homology"/>
<comment type="function">
    <text evidence="2">With S4 and S5 plays an important role in translational accuracy.</text>
</comment>
<comment type="function">
    <text evidence="2">Interacts with and stabilizes bases of the 16S rRNA that are involved in tRNA selection in the A site and with the mRNA backbone. Located at the interface of the 30S and 50S subunits, it traverses the body of the 30S subunit contacting proteins on the other side and probably holding the rRNA structure together. The combined cluster of proteins S8, S12 and S17 appears to hold together the shoulder and platform of the 30S subunit.</text>
</comment>
<comment type="subunit">
    <text evidence="2">Part of the 30S ribosomal subunit. Contacts proteins S8 and S17. May interact with IF1 in the 30S initiation complex.</text>
</comment>
<comment type="similarity">
    <text evidence="2">Belongs to the universal ribosomal protein uS12 family.</text>
</comment>
<evidence type="ECO:0000250" key="1"/>
<evidence type="ECO:0000255" key="2">
    <source>
        <dbReference type="HAMAP-Rule" id="MF_00403"/>
    </source>
</evidence>
<evidence type="ECO:0000256" key="3">
    <source>
        <dbReference type="SAM" id="MobiDB-lite"/>
    </source>
</evidence>
<evidence type="ECO:0000305" key="4"/>